<dbReference type="EMBL" id="AB065647">
    <property type="protein sequence ID" value="BAC05873.1"/>
    <property type="molecule type" value="Genomic_DNA"/>
</dbReference>
<dbReference type="EMBL" id="AL139287">
    <property type="status" value="NOT_ANNOTATED_CDS"/>
    <property type="molecule type" value="Genomic_DNA"/>
</dbReference>
<dbReference type="EMBL" id="BK000152">
    <property type="protein sequence ID" value="DAA00013.1"/>
    <property type="molecule type" value="mRNA"/>
</dbReference>
<dbReference type="CCDS" id="CCDS30556.1"/>
<dbReference type="RefSeq" id="NP_689414.2">
    <property type="nucleotide sequence ID" value="NM_152228.3"/>
</dbReference>
<dbReference type="SMR" id="Q7RTX0"/>
<dbReference type="BioGRID" id="123757">
    <property type="interactions" value="94"/>
</dbReference>
<dbReference type="FunCoup" id="Q7RTX0">
    <property type="interactions" value="168"/>
</dbReference>
<dbReference type="IntAct" id="Q7RTX0">
    <property type="interactions" value="8"/>
</dbReference>
<dbReference type="STRING" id="9606.ENSP00000344411"/>
<dbReference type="BindingDB" id="Q7RTX0"/>
<dbReference type="ChEMBL" id="CHEMBL1613742"/>
<dbReference type="DrugBank" id="DB00168">
    <property type="generic name" value="Aspartame"/>
</dbReference>
<dbReference type="TCDB" id="9.A.14.7.10">
    <property type="family name" value="the g-protein-coupled receptor (gpcr) family"/>
</dbReference>
<dbReference type="GlyCosmos" id="Q7RTX0">
    <property type="glycosylation" value="8 sites, No reported glycans"/>
</dbReference>
<dbReference type="GlyGen" id="Q7RTX0">
    <property type="glycosylation" value="9 sites, 4 N-linked glycans (2 sites)"/>
</dbReference>
<dbReference type="iPTMnet" id="Q7RTX0"/>
<dbReference type="BioMuta" id="TAS1R3"/>
<dbReference type="DMDM" id="62299063"/>
<dbReference type="jPOST" id="Q7RTX0"/>
<dbReference type="MassIVE" id="Q7RTX0"/>
<dbReference type="PaxDb" id="9606-ENSP00000344411"/>
<dbReference type="PeptideAtlas" id="Q7RTX0"/>
<dbReference type="Antibodypedia" id="26289">
    <property type="antibodies" value="331 antibodies from 30 providers"/>
</dbReference>
<dbReference type="DNASU" id="83756"/>
<dbReference type="Ensembl" id="ENST00000339381.6">
    <property type="protein sequence ID" value="ENSP00000344411.5"/>
    <property type="gene ID" value="ENSG00000169962.5"/>
</dbReference>
<dbReference type="GeneID" id="83756"/>
<dbReference type="KEGG" id="hsa:83756"/>
<dbReference type="MANE-Select" id="ENST00000339381.6">
    <property type="protein sequence ID" value="ENSP00000344411.5"/>
    <property type="RefSeq nucleotide sequence ID" value="NM_152228.3"/>
    <property type="RefSeq protein sequence ID" value="NP_689414.2"/>
</dbReference>
<dbReference type="UCSC" id="uc010nyk.3">
    <property type="organism name" value="human"/>
</dbReference>
<dbReference type="AGR" id="HGNC:15661"/>
<dbReference type="CTD" id="83756"/>
<dbReference type="DisGeNET" id="83756"/>
<dbReference type="GeneCards" id="TAS1R3"/>
<dbReference type="HGNC" id="HGNC:15661">
    <property type="gene designation" value="TAS1R3"/>
</dbReference>
<dbReference type="HPA" id="ENSG00000169962">
    <property type="expression patterns" value="Group enriched (epididymis, lymphoid tissue, salivary gland)"/>
</dbReference>
<dbReference type="MIM" id="605865">
    <property type="type" value="gene"/>
</dbReference>
<dbReference type="neXtProt" id="NX_Q7RTX0"/>
<dbReference type="OpenTargets" id="ENSG00000169962"/>
<dbReference type="PharmGKB" id="PA38012"/>
<dbReference type="VEuPathDB" id="HostDB:ENSG00000169962"/>
<dbReference type="eggNOG" id="KOG1056">
    <property type="taxonomic scope" value="Eukaryota"/>
</dbReference>
<dbReference type="GeneTree" id="ENSGT00940000160679"/>
<dbReference type="HOGENOM" id="CLU_005389_1_0_1"/>
<dbReference type="InParanoid" id="Q7RTX0"/>
<dbReference type="OMA" id="FHLCCYD"/>
<dbReference type="OrthoDB" id="5984008at2759"/>
<dbReference type="PAN-GO" id="Q7RTX0">
    <property type="GO annotations" value="5 GO annotations based on evolutionary models"/>
</dbReference>
<dbReference type="PhylomeDB" id="Q7RTX0"/>
<dbReference type="TreeFam" id="TF331269"/>
<dbReference type="PathwayCommons" id="Q7RTX0"/>
<dbReference type="Reactome" id="R-HSA-418594">
    <property type="pathway name" value="G alpha (i) signalling events"/>
</dbReference>
<dbReference type="Reactome" id="R-HSA-420499">
    <property type="pathway name" value="Class C/3 (Metabotropic glutamate/pheromone receptors)"/>
</dbReference>
<dbReference type="Reactome" id="R-HSA-9717207">
    <property type="pathway name" value="Sensory perception of sweet, bitter, and umami (glutamate) taste"/>
</dbReference>
<dbReference type="BioGRID-ORCS" id="83756">
    <property type="hits" value="15 hits in 1140 CRISPR screens"/>
</dbReference>
<dbReference type="GeneWiki" id="TAS1R3"/>
<dbReference type="GenomeRNAi" id="83756"/>
<dbReference type="Pharos" id="Q7RTX0">
    <property type="development level" value="Tbio"/>
</dbReference>
<dbReference type="PRO" id="PR:Q7RTX0"/>
<dbReference type="Proteomes" id="UP000005640">
    <property type="component" value="Chromosome 1"/>
</dbReference>
<dbReference type="RNAct" id="Q7RTX0">
    <property type="molecule type" value="protein"/>
</dbReference>
<dbReference type="Bgee" id="ENSG00000169962">
    <property type="expression patterns" value="Expressed in bone marrow cell and 94 other cell types or tissues"/>
</dbReference>
<dbReference type="GO" id="GO:0005794">
    <property type="term" value="C:Golgi apparatus"/>
    <property type="evidence" value="ECO:0000314"/>
    <property type="project" value="HPA"/>
</dbReference>
<dbReference type="GO" id="GO:0016020">
    <property type="term" value="C:membrane"/>
    <property type="evidence" value="ECO:0000305"/>
    <property type="project" value="UniProtKB"/>
</dbReference>
<dbReference type="GO" id="GO:0005886">
    <property type="term" value="C:plasma membrane"/>
    <property type="evidence" value="ECO:0000314"/>
    <property type="project" value="HPA"/>
</dbReference>
<dbReference type="GO" id="GO:1903767">
    <property type="term" value="C:sweet taste receptor complex"/>
    <property type="evidence" value="ECO:0000314"/>
    <property type="project" value="BHF-UCL"/>
</dbReference>
<dbReference type="GO" id="GO:0004930">
    <property type="term" value="F:G protein-coupled receptor activity"/>
    <property type="evidence" value="ECO:0000318"/>
    <property type="project" value="GO_Central"/>
</dbReference>
<dbReference type="GO" id="GO:0008527">
    <property type="term" value="F:taste receptor activity"/>
    <property type="evidence" value="ECO:0000353"/>
    <property type="project" value="UniProtKB"/>
</dbReference>
<dbReference type="GO" id="GO:0001582">
    <property type="term" value="P:detection of chemical stimulus involved in sensory perception of sweet taste"/>
    <property type="evidence" value="ECO:0000314"/>
    <property type="project" value="HGNC-UCL"/>
</dbReference>
<dbReference type="GO" id="GO:0007186">
    <property type="term" value="P:G protein-coupled receptor signaling pathway"/>
    <property type="evidence" value="ECO:0000305"/>
    <property type="project" value="HGNC-UCL"/>
</dbReference>
<dbReference type="GO" id="GO:0050916">
    <property type="term" value="P:sensory perception of sweet taste"/>
    <property type="evidence" value="ECO:0000314"/>
    <property type="project" value="UniProtKB"/>
</dbReference>
<dbReference type="GO" id="GO:0050917">
    <property type="term" value="P:sensory perception of umami taste"/>
    <property type="evidence" value="ECO:0000314"/>
    <property type="project" value="UniProtKB"/>
</dbReference>
<dbReference type="CDD" id="cd15290">
    <property type="entry name" value="7tmC_TAS1R3"/>
    <property type="match status" value="1"/>
</dbReference>
<dbReference type="CDD" id="cd06363">
    <property type="entry name" value="PBP1_taste_receptor"/>
    <property type="match status" value="1"/>
</dbReference>
<dbReference type="FunFam" id="3.40.50.2300:FF:000016">
    <property type="entry name" value="Taste 1 receptor member 2"/>
    <property type="match status" value="1"/>
</dbReference>
<dbReference type="FunFam" id="2.10.50.30:FF:000004">
    <property type="entry name" value="Taste receptor type 1 member 3-like protein"/>
    <property type="match status" value="1"/>
</dbReference>
<dbReference type="Gene3D" id="3.40.50.2300">
    <property type="match status" value="2"/>
</dbReference>
<dbReference type="Gene3D" id="2.10.50.30">
    <property type="entry name" value="GPCR, family 3, nine cysteines domain"/>
    <property type="match status" value="1"/>
</dbReference>
<dbReference type="InterPro" id="IPR001828">
    <property type="entry name" value="ANF_lig-bd_rcpt"/>
</dbReference>
<dbReference type="InterPro" id="IPR000337">
    <property type="entry name" value="GPCR_3"/>
</dbReference>
<dbReference type="InterPro" id="IPR011500">
    <property type="entry name" value="GPCR_3_9-Cys_dom"/>
</dbReference>
<dbReference type="InterPro" id="IPR038550">
    <property type="entry name" value="GPCR_3_9-Cys_sf"/>
</dbReference>
<dbReference type="InterPro" id="IPR017978">
    <property type="entry name" value="GPCR_3_C"/>
</dbReference>
<dbReference type="InterPro" id="IPR000068">
    <property type="entry name" value="GPCR_3_Ca_sens_rcpt-rel"/>
</dbReference>
<dbReference type="InterPro" id="IPR017979">
    <property type="entry name" value="GPCR_3_CS"/>
</dbReference>
<dbReference type="InterPro" id="IPR028082">
    <property type="entry name" value="Peripla_BP_I"/>
</dbReference>
<dbReference type="PANTHER" id="PTHR24061">
    <property type="entry name" value="CALCIUM-SENSING RECEPTOR-RELATED"/>
    <property type="match status" value="1"/>
</dbReference>
<dbReference type="PANTHER" id="PTHR24061:SF435">
    <property type="entry name" value="TASTE RECEPTOR TYPE 1 MEMBER 3"/>
    <property type="match status" value="1"/>
</dbReference>
<dbReference type="Pfam" id="PF00003">
    <property type="entry name" value="7tm_3"/>
    <property type="match status" value="1"/>
</dbReference>
<dbReference type="Pfam" id="PF01094">
    <property type="entry name" value="ANF_receptor"/>
    <property type="match status" value="1"/>
</dbReference>
<dbReference type="Pfam" id="PF07562">
    <property type="entry name" value="NCD3G"/>
    <property type="match status" value="1"/>
</dbReference>
<dbReference type="PRINTS" id="PR00248">
    <property type="entry name" value="GPCRMGR"/>
</dbReference>
<dbReference type="SUPFAM" id="SSF53822">
    <property type="entry name" value="Periplasmic binding protein-like I"/>
    <property type="match status" value="1"/>
</dbReference>
<dbReference type="PROSITE" id="PS00980">
    <property type="entry name" value="G_PROTEIN_RECEP_F3_2"/>
    <property type="match status" value="1"/>
</dbReference>
<dbReference type="PROSITE" id="PS50259">
    <property type="entry name" value="G_PROTEIN_RECEP_F3_4"/>
    <property type="match status" value="1"/>
</dbReference>
<comment type="function">
    <text evidence="1 3 4">Putative taste receptor. TAS1R1/TAS1R3 responds to the umami taste stimulus (the taste of monosodium glutamate). TAS1R2/TAS1R3 recognizes diverse natural and synthetic sweeteners. TAS1R3 is essential for the recognition and response to the disaccharide trehalose (By similarity). Sequence differences within and between species can significantly influence the selectivity and specificity of taste responses.</text>
</comment>
<comment type="subunit">
    <text>Forms homodimers or heterodimers with TAS1R1 and TAS1R2.</text>
</comment>
<comment type="subcellular location">
    <subcellularLocation>
        <location>Cell membrane</location>
        <topology>Multi-pass membrane protein</topology>
    </subcellularLocation>
</comment>
<comment type="similarity">
    <text evidence="6">Belongs to the G-protein coupled receptor 3 family. TAS1R subfamily.</text>
</comment>
<comment type="online information" name="Protein Spotlight">
    <link uri="https://www.proteinspotlight.org/back_issues/055"/>
    <text>The taste experience - Issue 55 of February 2005</text>
</comment>
<evidence type="ECO:0000250" key="1"/>
<evidence type="ECO:0000255" key="2"/>
<evidence type="ECO:0000269" key="3">
    <source>
    </source>
</evidence>
<evidence type="ECO:0000269" key="4">
    <source>
    </source>
</evidence>
<evidence type="ECO:0000269" key="5">
    <source>
    </source>
</evidence>
<evidence type="ECO:0000305" key="6"/>
<feature type="signal peptide" evidence="2">
    <location>
        <begin position="1"/>
        <end position="20"/>
    </location>
</feature>
<feature type="chain" id="PRO_0000012961" description="Taste receptor type 1 member 3">
    <location>
        <begin position="21"/>
        <end position="852"/>
    </location>
</feature>
<feature type="topological domain" description="Extracellular" evidence="2">
    <location>
        <begin position="21"/>
        <end position="570"/>
    </location>
</feature>
<feature type="transmembrane region" description="Helical; Name=1" evidence="2">
    <location>
        <begin position="571"/>
        <end position="591"/>
    </location>
</feature>
<feature type="topological domain" description="Cytoplasmic" evidence="2">
    <location>
        <begin position="592"/>
        <end position="603"/>
    </location>
</feature>
<feature type="transmembrane region" description="Helical; Name=2" evidence="2">
    <location>
        <begin position="604"/>
        <end position="624"/>
    </location>
</feature>
<feature type="topological domain" description="Extracellular" evidence="2">
    <location>
        <begin position="625"/>
        <end position="639"/>
    </location>
</feature>
<feature type="transmembrane region" description="Helical; Name=3" evidence="2">
    <location>
        <begin position="640"/>
        <end position="660"/>
    </location>
</feature>
<feature type="topological domain" description="Cytoplasmic" evidence="2">
    <location>
        <begin position="661"/>
        <end position="682"/>
    </location>
</feature>
<feature type="transmembrane region" description="Helical; Name=4" evidence="2">
    <location>
        <begin position="683"/>
        <end position="703"/>
    </location>
</feature>
<feature type="topological domain" description="Extracellular" evidence="2">
    <location>
        <begin position="704"/>
        <end position="729"/>
    </location>
</feature>
<feature type="transmembrane region" description="Helical; Name=5" evidence="2">
    <location>
        <begin position="730"/>
        <end position="750"/>
    </location>
</feature>
<feature type="topological domain" description="Cytoplasmic" evidence="2">
    <location>
        <begin position="751"/>
        <end position="762"/>
    </location>
</feature>
<feature type="transmembrane region" description="Helical; Name=6" evidence="2">
    <location>
        <begin position="763"/>
        <end position="783"/>
    </location>
</feature>
<feature type="topological domain" description="Extracellular" evidence="2">
    <location>
        <begin position="784"/>
        <end position="789"/>
    </location>
</feature>
<feature type="transmembrane region" description="Helical; Name=7" evidence="2">
    <location>
        <begin position="790"/>
        <end position="810"/>
    </location>
</feature>
<feature type="topological domain" description="Cytoplasmic" evidence="2">
    <location>
        <begin position="811"/>
        <end position="852"/>
    </location>
</feature>
<feature type="region of interest" description="Required for brazzein responsiveness">
    <location>
        <begin position="536"/>
        <end position="545"/>
    </location>
</feature>
<feature type="glycosylation site" description="N-linked (GlcNAc...) asparagine" evidence="2">
    <location>
        <position position="85"/>
    </location>
</feature>
<feature type="glycosylation site" description="N-linked (GlcNAc...) asparagine" evidence="2">
    <location>
        <position position="130"/>
    </location>
</feature>
<feature type="glycosylation site" description="N-linked (GlcNAc...) asparagine" evidence="2">
    <location>
        <position position="264"/>
    </location>
</feature>
<feature type="glycosylation site" description="N-linked (GlcNAc...) asparagine" evidence="2">
    <location>
        <position position="285"/>
    </location>
</feature>
<feature type="glycosylation site" description="N-linked (GlcNAc...) asparagine" evidence="2">
    <location>
        <position position="380"/>
    </location>
</feature>
<feature type="glycosylation site" description="N-linked (GlcNAc...) asparagine" evidence="2">
    <location>
        <position position="411"/>
    </location>
</feature>
<feature type="glycosylation site" description="N-linked (GlcNAc...) asparagine" evidence="2">
    <location>
        <position position="432"/>
    </location>
</feature>
<feature type="glycosylation site" description="N-linked (GlcNAc...) asparagine" evidence="2">
    <location>
        <position position="475"/>
    </location>
</feature>
<feature type="sequence variant" id="VAR_020788" description="In dbSNP:rs307377.">
    <original>C</original>
    <variation>R</variation>
    <location>
        <position position="757"/>
    </location>
</feature>
<feature type="mutagenesis site" description="Retains partial activity toward brazzein; however response to other sweeteners tested is suppressed." evidence="5">
    <original>A</original>
    <variation>G</variation>
    <location>
        <position position="537"/>
    </location>
</feature>
<feature type="mutagenesis site" description="Receptor unresponsive to all sweeteners tested." evidence="5">
    <original>A</original>
    <variation>P</variation>
    <location>
        <position position="537"/>
    </location>
</feature>
<feature type="mutagenesis site" description="Abolished the response to brazzein." evidence="5">
    <original>A</original>
    <variation>T</variation>
    <variation>S</variation>
    <variation>E</variation>
    <variation>V</variation>
    <location>
        <position position="537"/>
    </location>
</feature>
<feature type="mutagenesis site" description="Reduces the response to brazzein and monellin." evidence="5">
    <original>F</original>
    <variation>A</variation>
    <variation>H</variation>
    <location>
        <position position="540"/>
    </location>
</feature>
<feature type="mutagenesis site" description="Reduces the response to monellin." evidence="5">
    <original>F</original>
    <variation>L</variation>
    <location>
        <position position="540"/>
    </location>
</feature>
<feature type="mutagenesis site" description="Reduces the response to brazzein; P-540 also enhances responses to the small molecule sweeteners." evidence="5">
    <original>F</original>
    <variation>Y</variation>
    <variation>P</variation>
    <location>
        <position position="540"/>
    </location>
</feature>
<feature type="sequence conflict" description="In Ref. 1; BAC05873." evidence="6" ref="1">
    <original>E</original>
    <variation>EAPILHPARHHSSGRPGGGTQAYAQGRARRGRGGTQLPTLPFAQWVDSIMTVTSTRDRAQDLTPARRQAHTGSPVRVPGSAPSRA</variation>
    <location>
        <position position="852"/>
    </location>
</feature>
<gene>
    <name type="primary">TAS1R3</name>
    <name type="synonym">T1R3</name>
    <name type="synonym">TR3</name>
</gene>
<protein>
    <recommendedName>
        <fullName>Taste receptor type 1 member 3</fullName>
    </recommendedName>
    <alternativeName>
        <fullName>Sweet taste receptor T1R3</fullName>
    </alternativeName>
</protein>
<organism>
    <name type="scientific">Homo sapiens</name>
    <name type="common">Human</name>
    <dbReference type="NCBI Taxonomy" id="9606"/>
    <lineage>
        <taxon>Eukaryota</taxon>
        <taxon>Metazoa</taxon>
        <taxon>Chordata</taxon>
        <taxon>Craniata</taxon>
        <taxon>Vertebrata</taxon>
        <taxon>Euteleostomi</taxon>
        <taxon>Mammalia</taxon>
        <taxon>Eutheria</taxon>
        <taxon>Euarchontoglires</taxon>
        <taxon>Primates</taxon>
        <taxon>Haplorrhini</taxon>
        <taxon>Catarrhini</taxon>
        <taxon>Hominidae</taxon>
        <taxon>Homo</taxon>
    </lineage>
</organism>
<proteinExistence type="evidence at protein level"/>
<sequence>MLGPAVLGLSLWALLHPGTGAPLCLSQQLRMKGDYVLGGLFPLGEAEEAGLRSRTRPSSPVCTRFSSNGLLWALAMKMAVEEINNKSDLLPGLRLGYDLFDTCSEPVVAMKPSLMFLAKAGSRDIAAYCNYTQYQPRVLAVIGPHSSELAMVTGKFFSFFLMPQVSYGASMELLSARETFPSFFRTVPSDRVQLTAAAELLQEFGWNWVAALGSDDEYGRQGLSIFSALAAARGICIAHEGLVPLPRADDSRLGKVQDVLHQVNQSSVQVVLLFASVHAAHALFNYSISSRLSPKVWVASEAWLTSDLVMGLPGMAQMGTVLGFLQRGAQLHEFPQYVKTHLALATDPAFCSALGEREQGLEEDVVGQRCPQCDCITLQNVSAGLNHHQTFSVYAAVYSVAQALHNTLQCNASGCPAQDPVKPWQLLENMYNLTFHVGGLPLRFDSSGNVDMEYDLKLWVWQGSVPRLHDVGRFNGSLRTERLKIRWHTSDNQKPVSRCSRQCQEGQVRRVKGFHSCCYDCVDCEAGSYRQNPDDIACTFCGQDEWSPERSTRCFRRRSRFLAWGEPAVLLLLLLLSLALGLVLAALGLFVHHRDSPLVQASGGPLACFGLVCLGLVCLSVLLFPGQPSPARCLAQQPLSHLPLTGCLSTLFLQAAEIFVESELPLSWADRLSGCLRGPWAWLVVLLAMLVEVALCTWYLVAFPPEVVTDWHMLPTEALVHCRTRSWVSFGLAHATNATLAFLCFLGTFLVRSQPGCYNRARGLTFAMLAYFITWVSFVPLLANVQVVLRPAVQMGALLLCVLGILAAFHLPRCYLLMRQPGLNTPEFFLGGGPGDAQGQNDGNTGNQGKHE</sequence>
<name>TS1R3_HUMAN</name>
<reference key="1">
    <citation type="submission" date="2001-07" db="EMBL/GenBank/DDBJ databases">
        <title>Genome-wide discovery and analysis of human seven transmembrane helix receptor genes.</title>
        <authorList>
            <person name="Suwa M."/>
            <person name="Sato T."/>
            <person name="Okouchi I."/>
            <person name="Arita M."/>
            <person name="Futami K."/>
            <person name="Matsumoto S."/>
            <person name="Tsutsumi S."/>
            <person name="Aburatani H."/>
            <person name="Asai K."/>
            <person name="Akiyama Y."/>
        </authorList>
    </citation>
    <scope>NUCLEOTIDE SEQUENCE [GENOMIC DNA]</scope>
</reference>
<reference key="2">
    <citation type="journal article" date="2006" name="Nature">
        <title>The DNA sequence and biological annotation of human chromosome 1.</title>
        <authorList>
            <person name="Gregory S.G."/>
            <person name="Barlow K.F."/>
            <person name="McLay K.E."/>
            <person name="Kaul R."/>
            <person name="Swarbreck D."/>
            <person name="Dunham A."/>
            <person name="Scott C.E."/>
            <person name="Howe K.L."/>
            <person name="Woodfine K."/>
            <person name="Spencer C.C.A."/>
            <person name="Jones M.C."/>
            <person name="Gillson C."/>
            <person name="Searle S."/>
            <person name="Zhou Y."/>
            <person name="Kokocinski F."/>
            <person name="McDonald L."/>
            <person name="Evans R."/>
            <person name="Phillips K."/>
            <person name="Atkinson A."/>
            <person name="Cooper R."/>
            <person name="Jones C."/>
            <person name="Hall R.E."/>
            <person name="Andrews T.D."/>
            <person name="Lloyd C."/>
            <person name="Ainscough R."/>
            <person name="Almeida J.P."/>
            <person name="Ambrose K.D."/>
            <person name="Anderson F."/>
            <person name="Andrew R.W."/>
            <person name="Ashwell R.I.S."/>
            <person name="Aubin K."/>
            <person name="Babbage A.K."/>
            <person name="Bagguley C.L."/>
            <person name="Bailey J."/>
            <person name="Beasley H."/>
            <person name="Bethel G."/>
            <person name="Bird C.P."/>
            <person name="Bray-Allen S."/>
            <person name="Brown J.Y."/>
            <person name="Brown A.J."/>
            <person name="Buckley D."/>
            <person name="Burton J."/>
            <person name="Bye J."/>
            <person name="Carder C."/>
            <person name="Chapman J.C."/>
            <person name="Clark S.Y."/>
            <person name="Clarke G."/>
            <person name="Clee C."/>
            <person name="Cobley V."/>
            <person name="Collier R.E."/>
            <person name="Corby N."/>
            <person name="Coville G.J."/>
            <person name="Davies J."/>
            <person name="Deadman R."/>
            <person name="Dunn M."/>
            <person name="Earthrowl M."/>
            <person name="Ellington A.G."/>
            <person name="Errington H."/>
            <person name="Frankish A."/>
            <person name="Frankland J."/>
            <person name="French L."/>
            <person name="Garner P."/>
            <person name="Garnett J."/>
            <person name="Gay L."/>
            <person name="Ghori M.R.J."/>
            <person name="Gibson R."/>
            <person name="Gilby L.M."/>
            <person name="Gillett W."/>
            <person name="Glithero R.J."/>
            <person name="Grafham D.V."/>
            <person name="Griffiths C."/>
            <person name="Griffiths-Jones S."/>
            <person name="Grocock R."/>
            <person name="Hammond S."/>
            <person name="Harrison E.S.I."/>
            <person name="Hart E."/>
            <person name="Haugen E."/>
            <person name="Heath P.D."/>
            <person name="Holmes S."/>
            <person name="Holt K."/>
            <person name="Howden P.J."/>
            <person name="Hunt A.R."/>
            <person name="Hunt S.E."/>
            <person name="Hunter G."/>
            <person name="Isherwood J."/>
            <person name="James R."/>
            <person name="Johnson C."/>
            <person name="Johnson D."/>
            <person name="Joy A."/>
            <person name="Kay M."/>
            <person name="Kershaw J.K."/>
            <person name="Kibukawa M."/>
            <person name="Kimberley A.M."/>
            <person name="King A."/>
            <person name="Knights A.J."/>
            <person name="Lad H."/>
            <person name="Laird G."/>
            <person name="Lawlor S."/>
            <person name="Leongamornlert D.A."/>
            <person name="Lloyd D.M."/>
            <person name="Loveland J."/>
            <person name="Lovell J."/>
            <person name="Lush M.J."/>
            <person name="Lyne R."/>
            <person name="Martin S."/>
            <person name="Mashreghi-Mohammadi M."/>
            <person name="Matthews L."/>
            <person name="Matthews N.S.W."/>
            <person name="McLaren S."/>
            <person name="Milne S."/>
            <person name="Mistry S."/>
            <person name="Moore M.J.F."/>
            <person name="Nickerson T."/>
            <person name="O'Dell C.N."/>
            <person name="Oliver K."/>
            <person name="Palmeiri A."/>
            <person name="Palmer S.A."/>
            <person name="Parker A."/>
            <person name="Patel D."/>
            <person name="Pearce A.V."/>
            <person name="Peck A.I."/>
            <person name="Pelan S."/>
            <person name="Phelps K."/>
            <person name="Phillimore B.J."/>
            <person name="Plumb R."/>
            <person name="Rajan J."/>
            <person name="Raymond C."/>
            <person name="Rouse G."/>
            <person name="Saenphimmachak C."/>
            <person name="Sehra H.K."/>
            <person name="Sheridan E."/>
            <person name="Shownkeen R."/>
            <person name="Sims S."/>
            <person name="Skuce C.D."/>
            <person name="Smith M."/>
            <person name="Steward C."/>
            <person name="Subramanian S."/>
            <person name="Sycamore N."/>
            <person name="Tracey A."/>
            <person name="Tromans A."/>
            <person name="Van Helmond Z."/>
            <person name="Wall M."/>
            <person name="Wallis J.M."/>
            <person name="White S."/>
            <person name="Whitehead S.L."/>
            <person name="Wilkinson J.E."/>
            <person name="Willey D.L."/>
            <person name="Williams H."/>
            <person name="Wilming L."/>
            <person name="Wray P.W."/>
            <person name="Wu Z."/>
            <person name="Coulson A."/>
            <person name="Vaudin M."/>
            <person name="Sulston J.E."/>
            <person name="Durbin R.M."/>
            <person name="Hubbard T."/>
            <person name="Wooster R."/>
            <person name="Dunham I."/>
            <person name="Carter N.P."/>
            <person name="McVean G."/>
            <person name="Ross M.T."/>
            <person name="Harrow J."/>
            <person name="Olson M.V."/>
            <person name="Beck S."/>
            <person name="Rogers J."/>
            <person name="Bentley D.R."/>
        </authorList>
    </citation>
    <scope>NUCLEOTIDE SEQUENCE [LARGE SCALE GENOMIC DNA]</scope>
</reference>
<reference key="3">
    <citation type="journal article" date="2002" name="Proc. Natl. Acad. Sci. U.S.A.">
        <title>Human receptors for sweet and umami taste.</title>
        <authorList>
            <person name="Li X."/>
            <person name="Staszewski L."/>
            <person name="Xu H."/>
            <person name="Durick K."/>
            <person name="Zoller M."/>
            <person name="Adler E."/>
        </authorList>
    </citation>
    <scope>IDENTIFICATION</scope>
    <scope>FUNCTION</scope>
</reference>
<reference key="4">
    <citation type="journal article" date="2003" name="In Vitro Cell. Dev. Biol. Anim.">
        <title>Taste receptor T1R3 is an essential molecule for the cellular recognition of the disaccharide trehalose.</title>
        <authorList>
            <person name="Ariyasu T."/>
            <person name="Matsumoto S."/>
            <person name="Kyono F."/>
            <person name="Hanaya T."/>
            <person name="Arai S."/>
            <person name="Ikeda M."/>
            <person name="Kurimoto M."/>
        </authorList>
    </citation>
    <scope>FUNCTION</scope>
</reference>
<reference key="5">
    <citation type="journal article" date="2004" name="J. Biol. Chem.">
        <title>The cysteine-rich region of T1R3 determines responses to intensely sweet proteins.</title>
        <authorList>
            <person name="Jiang P."/>
            <person name="Ji Q."/>
            <person name="Liu Z."/>
            <person name="Snyder L.A."/>
            <person name="Benard L.M.J."/>
            <person name="Margolskee R.F."/>
            <person name="Max M."/>
        </authorList>
    </citation>
    <scope>REGION IMPLICATED IN SWEET RECEPTOR FUNCTION</scope>
    <scope>MUTAGENESIS OF ALA-537 AND PHE-540</scope>
</reference>
<keyword id="KW-1003">Cell membrane</keyword>
<keyword id="KW-0297">G-protein coupled receptor</keyword>
<keyword id="KW-0325">Glycoprotein</keyword>
<keyword id="KW-0472">Membrane</keyword>
<keyword id="KW-1267">Proteomics identification</keyword>
<keyword id="KW-0675">Receptor</keyword>
<keyword id="KW-1185">Reference proteome</keyword>
<keyword id="KW-0716">Sensory transduction</keyword>
<keyword id="KW-0732">Signal</keyword>
<keyword id="KW-0919">Taste</keyword>
<keyword id="KW-0807">Transducer</keyword>
<keyword id="KW-0812">Transmembrane</keyword>
<keyword id="KW-1133">Transmembrane helix</keyword>
<accession>Q7RTX0</accession>
<accession>Q5TA49</accession>
<accession>Q8NGW9</accession>